<comment type="similarity">
    <text evidence="1">Belongs to the SfsA family.</text>
</comment>
<reference key="1">
    <citation type="journal article" date="2001" name="DNA Res.">
        <title>Complete genomic sequence of the filamentous nitrogen-fixing cyanobacterium Anabaena sp. strain PCC 7120.</title>
        <authorList>
            <person name="Kaneko T."/>
            <person name="Nakamura Y."/>
            <person name="Wolk C.P."/>
            <person name="Kuritz T."/>
            <person name="Sasamoto S."/>
            <person name="Watanabe A."/>
            <person name="Iriguchi M."/>
            <person name="Ishikawa A."/>
            <person name="Kawashima K."/>
            <person name="Kimura T."/>
            <person name="Kishida Y."/>
            <person name="Kohara M."/>
            <person name="Matsumoto M."/>
            <person name="Matsuno A."/>
            <person name="Muraki A."/>
            <person name="Nakazaki N."/>
            <person name="Shimpo S."/>
            <person name="Sugimoto M."/>
            <person name="Takazawa M."/>
            <person name="Yamada M."/>
            <person name="Yasuda M."/>
            <person name="Tabata S."/>
        </authorList>
    </citation>
    <scope>NUCLEOTIDE SEQUENCE [LARGE SCALE GENOMIC DNA]</scope>
    <source>
        <strain>PCC 7120 / SAG 25.82 / UTEX 2576</strain>
    </source>
</reference>
<protein>
    <recommendedName>
        <fullName evidence="1">Sugar fermentation stimulation protein homolog</fullName>
    </recommendedName>
</protein>
<accession>Q8YSK0</accession>
<evidence type="ECO:0000255" key="1">
    <source>
        <dbReference type="HAMAP-Rule" id="MF_00095"/>
    </source>
</evidence>
<keyword id="KW-1185">Reference proteome</keyword>
<name>SFSA_NOSS1</name>
<dbReference type="EMBL" id="BA000019">
    <property type="protein sequence ID" value="BAB74784.1"/>
    <property type="molecule type" value="Genomic_DNA"/>
</dbReference>
<dbReference type="PIR" id="AF2191">
    <property type="entry name" value="AF2191"/>
</dbReference>
<dbReference type="RefSeq" id="WP_010997236.1">
    <property type="nucleotide sequence ID" value="NZ_RSCN01000001.1"/>
</dbReference>
<dbReference type="SMR" id="Q8YSK0"/>
<dbReference type="STRING" id="103690.gene:10495121"/>
<dbReference type="KEGG" id="ana:alr3085"/>
<dbReference type="eggNOG" id="COG1489">
    <property type="taxonomic scope" value="Bacteria"/>
</dbReference>
<dbReference type="OrthoDB" id="9802365at2"/>
<dbReference type="Proteomes" id="UP000002483">
    <property type="component" value="Chromosome"/>
</dbReference>
<dbReference type="GO" id="GO:0003677">
    <property type="term" value="F:DNA binding"/>
    <property type="evidence" value="ECO:0007669"/>
    <property type="project" value="InterPro"/>
</dbReference>
<dbReference type="CDD" id="cd22359">
    <property type="entry name" value="SfsA-like_bacterial"/>
    <property type="match status" value="1"/>
</dbReference>
<dbReference type="Gene3D" id="2.40.50.580">
    <property type="match status" value="1"/>
</dbReference>
<dbReference type="Gene3D" id="3.40.1350.60">
    <property type="match status" value="1"/>
</dbReference>
<dbReference type="HAMAP" id="MF_00095">
    <property type="entry name" value="SfsA"/>
    <property type="match status" value="1"/>
</dbReference>
<dbReference type="InterPro" id="IPR005224">
    <property type="entry name" value="SfsA"/>
</dbReference>
<dbReference type="InterPro" id="IPR040452">
    <property type="entry name" value="SfsA_C"/>
</dbReference>
<dbReference type="InterPro" id="IPR041465">
    <property type="entry name" value="SfsA_N"/>
</dbReference>
<dbReference type="NCBIfam" id="TIGR00230">
    <property type="entry name" value="sfsA"/>
    <property type="match status" value="1"/>
</dbReference>
<dbReference type="PANTHER" id="PTHR30545">
    <property type="entry name" value="SUGAR FERMENTATION STIMULATION PROTEIN A"/>
    <property type="match status" value="1"/>
</dbReference>
<dbReference type="PANTHER" id="PTHR30545:SF2">
    <property type="entry name" value="SUGAR FERMENTATION STIMULATION PROTEIN A"/>
    <property type="match status" value="1"/>
</dbReference>
<dbReference type="Pfam" id="PF03749">
    <property type="entry name" value="SfsA"/>
    <property type="match status" value="1"/>
</dbReference>
<dbReference type="Pfam" id="PF17746">
    <property type="entry name" value="SfsA_N"/>
    <property type="match status" value="1"/>
</dbReference>
<feature type="chain" id="PRO_0000152267" description="Sugar fermentation stimulation protein homolog">
    <location>
        <begin position="1"/>
        <end position="241"/>
    </location>
</feature>
<organism>
    <name type="scientific">Nostoc sp. (strain PCC 7120 / SAG 25.82 / UTEX 2576)</name>
    <dbReference type="NCBI Taxonomy" id="103690"/>
    <lineage>
        <taxon>Bacteria</taxon>
        <taxon>Bacillati</taxon>
        <taxon>Cyanobacteriota</taxon>
        <taxon>Cyanophyceae</taxon>
        <taxon>Nostocales</taxon>
        <taxon>Nostocaceae</taxon>
        <taxon>Nostoc</taxon>
    </lineage>
</organism>
<gene>
    <name evidence="1" type="primary">sfsA</name>
    <name type="ordered locus">alr3085</name>
</gene>
<sequence length="241" mass="27089">MTDWLYRYPPLYTGILLKRYKRFFADVQLTSGEVVTAHCPNTGPMTGVSTLGSAVQLSKSANPKRKLAYTLELIQVHDNEPTWVGVNTALPNQIVKLALAKYLFPELGNYSYIKSEVVYGVDKKSRVDFFLTGSDTERPIYLEVKNTTWTKGTLALFPDTETTRGQKHLRELTALLPQMRSVMLYFINRGDCTEFAPGDSTDPIYGKLLREAIALGLEVLPCRFDVTPEGIRYLGLAKLVI</sequence>
<proteinExistence type="inferred from homology"/>